<proteinExistence type="evidence at protein level"/>
<protein>
    <recommendedName>
        <fullName evidence="8">Pollen receptor-like kinase 6</fullName>
        <shortName evidence="8">AtPRK6</shortName>
    </recommendedName>
</protein>
<evidence type="ECO:0000250" key="1">
    <source>
        <dbReference type="UniProtKB" id="Q94AG2"/>
    </source>
</evidence>
<evidence type="ECO:0000255" key="2"/>
<evidence type="ECO:0000255" key="3">
    <source>
        <dbReference type="PROSITE-ProRule" id="PRU00159"/>
    </source>
</evidence>
<evidence type="ECO:0000255" key="4">
    <source>
        <dbReference type="PROSITE-ProRule" id="PRU00498"/>
    </source>
</evidence>
<evidence type="ECO:0000256" key="5">
    <source>
        <dbReference type="SAM" id="MobiDB-lite"/>
    </source>
</evidence>
<evidence type="ECO:0000269" key="6">
    <source>
    </source>
</evidence>
<evidence type="ECO:0000269" key="7">
    <source>
    </source>
</evidence>
<evidence type="ECO:0000303" key="8">
    <source>
    </source>
</evidence>
<evidence type="ECO:0000305" key="9"/>
<evidence type="ECO:0000312" key="10">
    <source>
        <dbReference type="Araport" id="AT5G20690"/>
    </source>
</evidence>
<evidence type="ECO:0000312" key="11">
    <source>
        <dbReference type="EMBL" id="AF296832"/>
    </source>
</evidence>
<evidence type="ECO:0007744" key="12">
    <source>
        <dbReference type="PDB" id="5Y9W"/>
    </source>
</evidence>
<evidence type="ECO:0007744" key="13">
    <source>
        <dbReference type="PDB" id="5YAH"/>
    </source>
</evidence>
<evidence type="ECO:0007829" key="14">
    <source>
        <dbReference type="PDB" id="5Y9W"/>
    </source>
</evidence>
<keyword id="KW-0002">3D-structure</keyword>
<keyword id="KW-0067">ATP-binding</keyword>
<keyword id="KW-1003">Cell membrane</keyword>
<keyword id="KW-1015">Disulfide bond</keyword>
<keyword id="KW-0325">Glycoprotein</keyword>
<keyword id="KW-0418">Kinase</keyword>
<keyword id="KW-0433">Leucine-rich repeat</keyword>
<keyword id="KW-0472">Membrane</keyword>
<keyword id="KW-0547">Nucleotide-binding</keyword>
<keyword id="KW-0597">Phosphoprotein</keyword>
<keyword id="KW-0675">Receptor</keyword>
<keyword id="KW-1185">Reference proteome</keyword>
<keyword id="KW-0677">Repeat</keyword>
<keyword id="KW-0723">Serine/threonine-protein kinase</keyword>
<keyword id="KW-0732">Signal</keyword>
<keyword id="KW-0808">Transferase</keyword>
<keyword id="KW-0812">Transmembrane</keyword>
<keyword id="KW-1133">Transmembrane helix</keyword>
<reference key="1">
    <citation type="journal article" date="2000" name="Nature">
        <title>Sequence and analysis of chromosome 5 of the plant Arabidopsis thaliana.</title>
        <authorList>
            <person name="Tabata S."/>
            <person name="Kaneko T."/>
            <person name="Nakamura Y."/>
            <person name="Kotani H."/>
            <person name="Kato T."/>
            <person name="Asamizu E."/>
            <person name="Miyajima N."/>
            <person name="Sasamoto S."/>
            <person name="Kimura T."/>
            <person name="Hosouchi T."/>
            <person name="Kawashima K."/>
            <person name="Kohara M."/>
            <person name="Matsumoto M."/>
            <person name="Matsuno A."/>
            <person name="Muraki A."/>
            <person name="Nakayama S."/>
            <person name="Nakazaki N."/>
            <person name="Naruo K."/>
            <person name="Okumura S."/>
            <person name="Shinpo S."/>
            <person name="Takeuchi C."/>
            <person name="Wada T."/>
            <person name="Watanabe A."/>
            <person name="Yamada M."/>
            <person name="Yasuda M."/>
            <person name="Sato S."/>
            <person name="de la Bastide M."/>
            <person name="Huang E."/>
            <person name="Spiegel L."/>
            <person name="Gnoj L."/>
            <person name="O'Shaughnessy A."/>
            <person name="Preston R."/>
            <person name="Habermann K."/>
            <person name="Murray J."/>
            <person name="Johnson D."/>
            <person name="Rohlfing T."/>
            <person name="Nelson J."/>
            <person name="Stoneking T."/>
            <person name="Pepin K."/>
            <person name="Spieth J."/>
            <person name="Sekhon M."/>
            <person name="Armstrong J."/>
            <person name="Becker M."/>
            <person name="Belter E."/>
            <person name="Cordum H."/>
            <person name="Cordes M."/>
            <person name="Courtney L."/>
            <person name="Courtney W."/>
            <person name="Dante M."/>
            <person name="Du H."/>
            <person name="Edwards J."/>
            <person name="Fryman J."/>
            <person name="Haakensen B."/>
            <person name="Lamar E."/>
            <person name="Latreille P."/>
            <person name="Leonard S."/>
            <person name="Meyer R."/>
            <person name="Mulvaney E."/>
            <person name="Ozersky P."/>
            <person name="Riley A."/>
            <person name="Strowmatt C."/>
            <person name="Wagner-McPherson C."/>
            <person name="Wollam A."/>
            <person name="Yoakum M."/>
            <person name="Bell M."/>
            <person name="Dedhia N."/>
            <person name="Parnell L."/>
            <person name="Shah R."/>
            <person name="Rodriguez M."/>
            <person name="Hoon See L."/>
            <person name="Vil D."/>
            <person name="Baker J."/>
            <person name="Kirchoff K."/>
            <person name="Toth K."/>
            <person name="King L."/>
            <person name="Bahret A."/>
            <person name="Miller B."/>
            <person name="Marra M.A."/>
            <person name="Martienssen R."/>
            <person name="McCombie W.R."/>
            <person name="Wilson R.K."/>
            <person name="Murphy G."/>
            <person name="Bancroft I."/>
            <person name="Volckaert G."/>
            <person name="Wambutt R."/>
            <person name="Duesterhoeft A."/>
            <person name="Stiekema W."/>
            <person name="Pohl T."/>
            <person name="Entian K.-D."/>
            <person name="Terryn N."/>
            <person name="Hartley N."/>
            <person name="Bent E."/>
            <person name="Johnson S."/>
            <person name="Langham S.-A."/>
            <person name="McCullagh B."/>
            <person name="Robben J."/>
            <person name="Grymonprez B."/>
            <person name="Zimmermann W."/>
            <person name="Ramsperger U."/>
            <person name="Wedler H."/>
            <person name="Balke K."/>
            <person name="Wedler E."/>
            <person name="Peters S."/>
            <person name="van Staveren M."/>
            <person name="Dirkse W."/>
            <person name="Mooijman P."/>
            <person name="Klein Lankhorst R."/>
            <person name="Weitzenegger T."/>
            <person name="Bothe G."/>
            <person name="Rose M."/>
            <person name="Hauf J."/>
            <person name="Berneiser S."/>
            <person name="Hempel S."/>
            <person name="Feldpausch M."/>
            <person name="Lamberth S."/>
            <person name="Villarroel R."/>
            <person name="Gielen J."/>
            <person name="Ardiles W."/>
            <person name="Bents O."/>
            <person name="Lemcke K."/>
            <person name="Kolesov G."/>
            <person name="Mayer K.F.X."/>
            <person name="Rudd S."/>
            <person name="Schoof H."/>
            <person name="Schueller C."/>
            <person name="Zaccaria P."/>
            <person name="Mewes H.-W."/>
            <person name="Bevan M."/>
            <person name="Fransz P.F."/>
        </authorList>
    </citation>
    <scope>NUCLEOTIDE SEQUENCE [LARGE SCALE GENOMIC DNA]</scope>
    <source>
        <strain>cv. Columbia</strain>
    </source>
</reference>
<reference key="2">
    <citation type="journal article" date="2017" name="Plant J.">
        <title>Araport11: a complete reannotation of the Arabidopsis thaliana reference genome.</title>
        <authorList>
            <person name="Cheng C.Y."/>
            <person name="Krishnakumar V."/>
            <person name="Chan A.P."/>
            <person name="Thibaud-Nissen F."/>
            <person name="Schobel S."/>
            <person name="Town C.D."/>
        </authorList>
    </citation>
    <scope>GENOME REANNOTATION</scope>
    <source>
        <strain>cv. Columbia</strain>
    </source>
</reference>
<reference key="3">
    <citation type="journal article" date="2010" name="BMC Genomics">
        <title>Genome-wide cloning and sequence analysis of leucine-rich repeat receptor-like protein kinase genes in Arabidopsis thaliana.</title>
        <authorList>
            <person name="Gou X."/>
            <person name="He K."/>
            <person name="Yang H."/>
            <person name="Yuan T."/>
            <person name="Lin H."/>
            <person name="Clouse S.D."/>
            <person name="Li J."/>
        </authorList>
    </citation>
    <scope>NUCLEOTIDE SEQUENCE [LARGE SCALE MRNA]</scope>
    <source>
        <strain>cv. Columbia</strain>
    </source>
</reference>
<reference key="4">
    <citation type="journal article" date="2013" name="Mol. Plant">
        <title>AtPRK2 Promotes ROP1 activation via RopGEFs in the control of polarized pollen tube growth.</title>
        <authorList>
            <person name="Chang F."/>
            <person name="Gu Y."/>
            <person name="Ma H."/>
            <person name="Yang Z."/>
        </authorList>
    </citation>
    <scope>GENE FAMILY</scope>
    <scope>NOMENCLATURE</scope>
</reference>
<reference key="5">
    <citation type="journal article" date="2016" name="Nature">
        <title>Tip-localized receptors control pollen tube growth and LURE sensing in Arabidopsis.</title>
        <authorList>
            <person name="Takeuchi H."/>
            <person name="Higashiyama T."/>
        </authorList>
    </citation>
    <scope>FUNCTION</scope>
    <scope>TISSUE SPECIFICITY</scope>
    <scope>SUBCELLULAR LOCATION</scope>
    <scope>DISRUPTION PHENOTYPE</scope>
    <scope>INTERACTION WITH ROPGEF8; ROPGEF9; ROPGEF12; ROPGEF13; PRK3; LIP1 AND LIP2</scope>
    <scope>DOMAIN</scope>
</reference>
<reference key="6">
    <citation type="journal article" date="2017" name="Nat. Commun.">
        <title>Structural basis for receptor recognition of pollen tube attraction peptides.</title>
        <authorList>
            <person name="Zhang X."/>
            <person name="Liu W."/>
            <person name="Nagae T.T."/>
            <person name="Takeuchi H."/>
            <person name="Zhang H."/>
            <person name="Han Z."/>
            <person name="Higashiyama T."/>
            <person name="Chai J."/>
        </authorList>
    </citation>
    <scope>X-RAY CRYSTALLOGRAPHY (1.85 ANGSTROMS) OF 27-262</scope>
    <scope>FUNCTION</scope>
    <scope>DISULFIDE BONDS</scope>
    <scope>INTERACTION WITH LURE1.2</scope>
    <scope>MUTAGENESIS OF GLU-226; TYR-227; ASP-234; 239-ASN-ILE-240 AND ASN-239</scope>
</reference>
<feature type="signal peptide" evidence="2">
    <location>
        <begin position="1"/>
        <end position="26"/>
    </location>
</feature>
<feature type="chain" id="PRO_0000401340" description="Pollen receptor-like kinase 6">
    <location>
        <begin position="27"/>
        <end position="659"/>
    </location>
</feature>
<feature type="topological domain" description="Extracellular" evidence="2">
    <location>
        <begin position="27"/>
        <end position="266"/>
    </location>
</feature>
<feature type="transmembrane region" description="Helical" evidence="2">
    <location>
        <begin position="267"/>
        <end position="287"/>
    </location>
</feature>
<feature type="topological domain" description="Cytoplasmic" evidence="2">
    <location>
        <begin position="288"/>
        <end position="659"/>
    </location>
</feature>
<feature type="repeat" description="LRR 1" evidence="2">
    <location>
        <begin position="95"/>
        <end position="118"/>
    </location>
</feature>
<feature type="repeat" description="LRR 2" evidence="2">
    <location>
        <begin position="120"/>
        <end position="142"/>
    </location>
</feature>
<feature type="repeat" description="LRR 3" evidence="2">
    <location>
        <begin position="143"/>
        <end position="167"/>
    </location>
</feature>
<feature type="repeat" description="LRR 4" evidence="2">
    <location>
        <begin position="168"/>
        <end position="190"/>
    </location>
</feature>
<feature type="repeat" description="LRR 5" evidence="2">
    <location>
        <begin position="192"/>
        <end position="214"/>
    </location>
</feature>
<feature type="domain" description="Protein kinase" evidence="3">
    <location>
        <begin position="384"/>
        <end position="659"/>
    </location>
</feature>
<feature type="region of interest" description="LURE peptides binding" evidence="7 12 13">
    <location>
        <begin position="226"/>
        <end position="242"/>
    </location>
</feature>
<feature type="region of interest" description="Disordered" evidence="5">
    <location>
        <begin position="241"/>
        <end position="260"/>
    </location>
</feature>
<feature type="region of interest" description="Disordered" evidence="5">
    <location>
        <begin position="312"/>
        <end position="354"/>
    </location>
</feature>
<feature type="compositionally biased region" description="Basic and acidic residues" evidence="5">
    <location>
        <begin position="324"/>
        <end position="341"/>
    </location>
</feature>
<feature type="binding site" evidence="3">
    <location>
        <begin position="390"/>
        <end position="398"/>
    </location>
    <ligand>
        <name>ATP</name>
        <dbReference type="ChEBI" id="CHEBI:30616"/>
    </ligand>
</feature>
<feature type="binding site" evidence="3">
    <location>
        <position position="412"/>
    </location>
    <ligand>
        <name>ATP</name>
        <dbReference type="ChEBI" id="CHEBI:30616"/>
    </ligand>
</feature>
<feature type="modified residue" description="Phosphoserine" evidence="1">
    <location>
        <position position="464"/>
    </location>
</feature>
<feature type="modified residue" description="Phosphothreonine" evidence="1">
    <location>
        <position position="484"/>
    </location>
</feature>
<feature type="modified residue" description="Phosphothreonine" evidence="1">
    <location>
        <position position="557"/>
    </location>
</feature>
<feature type="modified residue" description="Phosphoserine" evidence="1">
    <location>
        <position position="561"/>
    </location>
</feature>
<feature type="glycosylation site" description="N-linked (GlcNAc...) asparagine" evidence="4">
    <location>
        <position position="128"/>
    </location>
</feature>
<feature type="glycosylation site" description="N-linked (GlcNAc...) asparagine" evidence="4">
    <location>
        <position position="179"/>
    </location>
</feature>
<feature type="glycosylation site" description="N-linked (GlcNAc...) asparagine" evidence="4">
    <location>
        <position position="221"/>
    </location>
</feature>
<feature type="disulfide bond" evidence="7 12 13">
    <location>
        <begin position="58"/>
        <end position="67"/>
    </location>
</feature>
<feature type="disulfide bond" evidence="7 12 13">
    <location>
        <begin position="229"/>
        <end position="237"/>
    </location>
</feature>
<feature type="mutagenesis site" description="Normal interaction with LURE1.2." evidence="7">
    <original>E</original>
    <variation>A</variation>
    <location>
        <position position="226"/>
    </location>
</feature>
<feature type="mutagenesis site" description="Normal interaction with LURE1.2." evidence="7">
    <original>Y</original>
    <variation>A</variation>
    <location>
        <position position="227"/>
    </location>
</feature>
<feature type="mutagenesis site" description="Compromised interaction with LURE1.2. Reduced pollen tube attraction." evidence="7">
    <original>D</original>
    <variation>A</variation>
    <location>
        <position position="234"/>
    </location>
</feature>
<feature type="mutagenesis site" description="Compromised interaction with LURE1.2. Reduced pollen tube attraction." evidence="7">
    <location>
        <begin position="239"/>
        <end position="240"/>
    </location>
</feature>
<feature type="mutagenesis site" description="Normal interaction with LURE1.2. Normal pollen tube attraction." evidence="7">
    <original>N</original>
    <variation>A</variation>
    <location>
        <position position="239"/>
    </location>
</feature>
<feature type="sequence conflict" description="In Ref. 1; AF296832." evidence="9" ref="1">
    <original>G</original>
    <variation>R</variation>
    <location>
        <position position="396"/>
    </location>
</feature>
<feature type="helix" evidence="14">
    <location>
        <begin position="28"/>
        <end position="30"/>
    </location>
</feature>
<feature type="helix" evidence="14">
    <location>
        <begin position="31"/>
        <end position="40"/>
    </location>
</feature>
<feature type="strand" evidence="14">
    <location>
        <begin position="44"/>
        <end position="46"/>
    </location>
</feature>
<feature type="helix" evidence="14">
    <location>
        <begin position="57"/>
        <end position="59"/>
    </location>
</feature>
<feature type="strand" evidence="14">
    <location>
        <begin position="65"/>
        <end position="68"/>
    </location>
</feature>
<feature type="turn" evidence="14">
    <location>
        <begin position="69"/>
        <end position="71"/>
    </location>
</feature>
<feature type="strand" evidence="14">
    <location>
        <begin position="72"/>
        <end position="77"/>
    </location>
</feature>
<feature type="helix" evidence="14">
    <location>
        <begin position="92"/>
        <end position="94"/>
    </location>
</feature>
<feature type="strand" evidence="14">
    <location>
        <begin position="100"/>
        <end position="102"/>
    </location>
</feature>
<feature type="strand" evidence="14">
    <location>
        <begin position="105"/>
        <end position="111"/>
    </location>
</feature>
<feature type="helix" evidence="14">
    <location>
        <begin position="115"/>
        <end position="117"/>
    </location>
</feature>
<feature type="strand" evidence="14">
    <location>
        <begin position="123"/>
        <end position="125"/>
    </location>
</feature>
<feature type="strand" evidence="14">
    <location>
        <begin position="128"/>
        <end position="133"/>
    </location>
</feature>
<feature type="turn" evidence="14">
    <location>
        <begin position="137"/>
        <end position="142"/>
    </location>
</feature>
<feature type="strand" evidence="14">
    <location>
        <begin position="148"/>
        <end position="150"/>
    </location>
</feature>
<feature type="strand" evidence="14">
    <location>
        <begin position="153"/>
        <end position="158"/>
    </location>
</feature>
<feature type="helix" evidence="14">
    <location>
        <begin position="162"/>
        <end position="166"/>
    </location>
</feature>
<feature type="strand" evidence="14">
    <location>
        <begin position="172"/>
        <end position="174"/>
    </location>
</feature>
<feature type="strand" evidence="14">
    <location>
        <begin position="177"/>
        <end position="183"/>
    </location>
</feature>
<feature type="helix" evidence="14">
    <location>
        <begin position="186"/>
        <end position="190"/>
    </location>
</feature>
<feature type="strand" evidence="14">
    <location>
        <begin position="196"/>
        <end position="198"/>
    </location>
</feature>
<feature type="strand" evidence="14">
    <location>
        <begin position="201"/>
        <end position="207"/>
    </location>
</feature>
<feature type="helix" evidence="14">
    <location>
        <begin position="210"/>
        <end position="213"/>
    </location>
</feature>
<feature type="strand" evidence="14">
    <location>
        <begin position="219"/>
        <end position="221"/>
    </location>
</feature>
<feature type="strand" evidence="14">
    <location>
        <begin position="228"/>
        <end position="230"/>
    </location>
</feature>
<feature type="turn" evidence="14">
    <location>
        <begin position="231"/>
        <end position="234"/>
    </location>
</feature>
<dbReference type="EMBL" id="AF296832">
    <property type="status" value="NOT_ANNOTATED_CDS"/>
    <property type="molecule type" value="Genomic_DNA"/>
</dbReference>
<dbReference type="EMBL" id="CP002688">
    <property type="protein sequence ID" value="AED92878.1"/>
    <property type="molecule type" value="Genomic_DNA"/>
</dbReference>
<dbReference type="EMBL" id="FJ708781">
    <property type="protein sequence ID" value="ACN59372.1"/>
    <property type="molecule type" value="mRNA"/>
</dbReference>
<dbReference type="RefSeq" id="NP_197569.2">
    <property type="nucleotide sequence ID" value="NM_122076.3"/>
</dbReference>
<dbReference type="PDB" id="5Y9W">
    <property type="method" value="X-ray"/>
    <property type="resolution" value="1.85 A"/>
    <property type="chains" value="A/B=27-262"/>
</dbReference>
<dbReference type="PDB" id="5YAH">
    <property type="method" value="X-ray"/>
    <property type="resolution" value="2.10 A"/>
    <property type="chains" value="B=27-262"/>
</dbReference>
<dbReference type="PDBsum" id="5Y9W"/>
<dbReference type="PDBsum" id="5YAH"/>
<dbReference type="SMR" id="Q3E991"/>
<dbReference type="BioGRID" id="17467">
    <property type="interactions" value="9"/>
</dbReference>
<dbReference type="FunCoup" id="Q3E991">
    <property type="interactions" value="29"/>
</dbReference>
<dbReference type="IntAct" id="Q3E991">
    <property type="interactions" value="10"/>
</dbReference>
<dbReference type="STRING" id="3702.Q3E991"/>
<dbReference type="GlyCosmos" id="Q3E991">
    <property type="glycosylation" value="3 sites, No reported glycans"/>
</dbReference>
<dbReference type="GlyGen" id="Q3E991">
    <property type="glycosylation" value="3 sites"/>
</dbReference>
<dbReference type="PaxDb" id="3702-AT5G20690.1"/>
<dbReference type="ProteomicsDB" id="226414"/>
<dbReference type="EnsemblPlants" id="AT5G20690.1">
    <property type="protein sequence ID" value="AT5G20690.1"/>
    <property type="gene ID" value="AT5G20690"/>
</dbReference>
<dbReference type="GeneID" id="832192"/>
<dbReference type="Gramene" id="AT5G20690.1">
    <property type="protein sequence ID" value="AT5G20690.1"/>
    <property type="gene ID" value="AT5G20690"/>
</dbReference>
<dbReference type="KEGG" id="ath:AT5G20690"/>
<dbReference type="Araport" id="AT5G20690"/>
<dbReference type="TAIR" id="AT5G20690">
    <property type="gene designation" value="PRK6"/>
</dbReference>
<dbReference type="eggNOG" id="ENOG502QRTV">
    <property type="taxonomic scope" value="Eukaryota"/>
</dbReference>
<dbReference type="HOGENOM" id="CLU_000288_92_6_1"/>
<dbReference type="InParanoid" id="Q3E991"/>
<dbReference type="OMA" id="EPFDVEM"/>
<dbReference type="OrthoDB" id="418615at2759"/>
<dbReference type="PRO" id="PR:Q3E991"/>
<dbReference type="Proteomes" id="UP000006548">
    <property type="component" value="Chromosome 5"/>
</dbReference>
<dbReference type="ExpressionAtlas" id="Q3E991">
    <property type="expression patterns" value="baseline and differential"/>
</dbReference>
<dbReference type="GO" id="GO:0005737">
    <property type="term" value="C:cytoplasm"/>
    <property type="evidence" value="ECO:0000314"/>
    <property type="project" value="TAIR"/>
</dbReference>
<dbReference type="GO" id="GO:0005886">
    <property type="term" value="C:plasma membrane"/>
    <property type="evidence" value="ECO:0000314"/>
    <property type="project" value="TAIR"/>
</dbReference>
<dbReference type="GO" id="GO:0090404">
    <property type="term" value="C:pollen tube tip"/>
    <property type="evidence" value="ECO:0000314"/>
    <property type="project" value="TAIR"/>
</dbReference>
<dbReference type="GO" id="GO:0005524">
    <property type="term" value="F:ATP binding"/>
    <property type="evidence" value="ECO:0007669"/>
    <property type="project" value="UniProtKB-KW"/>
</dbReference>
<dbReference type="GO" id="GO:0042802">
    <property type="term" value="F:identical protein binding"/>
    <property type="evidence" value="ECO:0000353"/>
    <property type="project" value="TAIR"/>
</dbReference>
<dbReference type="GO" id="GO:0004674">
    <property type="term" value="F:protein serine/threonine kinase activity"/>
    <property type="evidence" value="ECO:0007669"/>
    <property type="project" value="UniProtKB-KW"/>
</dbReference>
<dbReference type="GO" id="GO:0010183">
    <property type="term" value="P:pollen tube guidance"/>
    <property type="evidence" value="ECO:0000315"/>
    <property type="project" value="UniProtKB"/>
</dbReference>
<dbReference type="FunFam" id="1.10.510.10:FF:000480">
    <property type="entry name" value="Pollen receptor-like kinase 1"/>
    <property type="match status" value="1"/>
</dbReference>
<dbReference type="FunFam" id="3.80.10.10:FF:001009">
    <property type="entry name" value="Pollen receptor-like kinase 6"/>
    <property type="match status" value="1"/>
</dbReference>
<dbReference type="Gene3D" id="3.30.200.20">
    <property type="entry name" value="Phosphorylase Kinase, domain 1"/>
    <property type="match status" value="1"/>
</dbReference>
<dbReference type="Gene3D" id="3.80.10.10">
    <property type="entry name" value="Ribonuclease Inhibitor"/>
    <property type="match status" value="1"/>
</dbReference>
<dbReference type="Gene3D" id="1.10.510.10">
    <property type="entry name" value="Transferase(Phosphotransferase) domain 1"/>
    <property type="match status" value="1"/>
</dbReference>
<dbReference type="InterPro" id="IPR011009">
    <property type="entry name" value="Kinase-like_dom_sf"/>
</dbReference>
<dbReference type="InterPro" id="IPR001611">
    <property type="entry name" value="Leu-rich_rpt"/>
</dbReference>
<dbReference type="InterPro" id="IPR003591">
    <property type="entry name" value="Leu-rich_rpt_typical-subtyp"/>
</dbReference>
<dbReference type="InterPro" id="IPR032675">
    <property type="entry name" value="LRR_dom_sf"/>
</dbReference>
<dbReference type="InterPro" id="IPR013210">
    <property type="entry name" value="LRR_N_plant-typ"/>
</dbReference>
<dbReference type="InterPro" id="IPR046959">
    <property type="entry name" value="PRK1-6/SRF4-like"/>
</dbReference>
<dbReference type="InterPro" id="IPR000719">
    <property type="entry name" value="Prot_kinase_dom"/>
</dbReference>
<dbReference type="InterPro" id="IPR001245">
    <property type="entry name" value="Ser-Thr/Tyr_kinase_cat_dom"/>
</dbReference>
<dbReference type="PANTHER" id="PTHR48007">
    <property type="entry name" value="LEUCINE-RICH REPEAT RECEPTOR-LIKE PROTEIN KINASE PXC1"/>
    <property type="match status" value="1"/>
</dbReference>
<dbReference type="PANTHER" id="PTHR48007:SF63">
    <property type="entry name" value="POLLEN RECEPTOR-LIKE KINASE 6"/>
    <property type="match status" value="1"/>
</dbReference>
<dbReference type="Pfam" id="PF00560">
    <property type="entry name" value="LRR_1"/>
    <property type="match status" value="1"/>
</dbReference>
<dbReference type="Pfam" id="PF13855">
    <property type="entry name" value="LRR_8"/>
    <property type="match status" value="1"/>
</dbReference>
<dbReference type="Pfam" id="PF08263">
    <property type="entry name" value="LRRNT_2"/>
    <property type="match status" value="1"/>
</dbReference>
<dbReference type="Pfam" id="PF07714">
    <property type="entry name" value="PK_Tyr_Ser-Thr"/>
    <property type="match status" value="1"/>
</dbReference>
<dbReference type="SMART" id="SM00369">
    <property type="entry name" value="LRR_TYP"/>
    <property type="match status" value="4"/>
</dbReference>
<dbReference type="SUPFAM" id="SSF52058">
    <property type="entry name" value="L domain-like"/>
    <property type="match status" value="1"/>
</dbReference>
<dbReference type="SUPFAM" id="SSF56112">
    <property type="entry name" value="Protein kinase-like (PK-like)"/>
    <property type="match status" value="1"/>
</dbReference>
<dbReference type="PROSITE" id="PS50011">
    <property type="entry name" value="PROTEIN_KINASE_DOM"/>
    <property type="match status" value="1"/>
</dbReference>
<accession>Q3E991</accession>
<comment type="function">
    <text evidence="6 7">Key receptor for sensing species-specific attractants in cooperation with other pollen receptor-like kinases (PubMed:26961657). Essential for pollen tube reorientation toward attractant peptides (PubMed:26961657, PubMed:29109411).</text>
</comment>
<comment type="subunit">
    <text evidence="6 7">Interacts with ROPGEF8, ROPGEF9, ROPGEF12, ROPGEF13, PRK3, LIP1 and LIP2 (PubMed:26961657). Binds to LURE peptides via its LRR repeats; interacts with LURE1.1, LURE1.2, LURE1.3 and LURE1.4 (PubMed:29109411).</text>
</comment>
<comment type="interaction">
    <interactant intactId="EBI-20657264">
        <id>Q3E991</id>
    </interactant>
    <interactant intactId="EBI-17121474">
        <id>Q93ZS4</id>
        <label>NIK3</label>
    </interactant>
    <organismsDiffer>false</organismsDiffer>
    <experiments>2</experiments>
</comment>
<comment type="subcellular location">
    <subcellularLocation>
        <location evidence="6">Cell membrane</location>
        <topology evidence="9">Single-pass type I membrane protein</topology>
    </subcellularLocation>
    <subcellularLocation>
        <location evidence="6">Cytoplasmic granule</location>
    </subcellularLocation>
    <text evidence="6">Re-localizes asymmetrically to direct tip growth direction toward the attractant peptides.</text>
</comment>
<comment type="tissue specificity">
    <text evidence="6">Expressed specifically in the pollen tube, predominantly at the tip.</text>
</comment>
<comment type="domain">
    <text evidence="6">The juxtamembrane domain (288-383) is required for interactions with ROPGEFs, while the kinase domain (384-659) is required for pollen tube growth.</text>
</comment>
<comment type="domain">
    <text evidence="3">The protein kinase domain may be catalytically impaired due to the lack of the conserved Asp active site at position 512, which is replaced by a Asn residue.</text>
</comment>
<comment type="disruption phenotype">
    <text evidence="6">Impaired response to the ovular attractant LURE1.2.</text>
</comment>
<comment type="similarity">
    <text evidence="3">Belongs to the protein kinase superfamily. Ser/Thr protein kinase family.</text>
</comment>
<organism>
    <name type="scientific">Arabidopsis thaliana</name>
    <name type="common">Mouse-ear cress</name>
    <dbReference type="NCBI Taxonomy" id="3702"/>
    <lineage>
        <taxon>Eukaryota</taxon>
        <taxon>Viridiplantae</taxon>
        <taxon>Streptophyta</taxon>
        <taxon>Embryophyta</taxon>
        <taxon>Tracheophyta</taxon>
        <taxon>Spermatophyta</taxon>
        <taxon>Magnoliopsida</taxon>
        <taxon>eudicotyledons</taxon>
        <taxon>Gunneridae</taxon>
        <taxon>Pentapetalae</taxon>
        <taxon>rosids</taxon>
        <taxon>malvids</taxon>
        <taxon>Brassicales</taxon>
        <taxon>Brassicaceae</taxon>
        <taxon>Camelineae</taxon>
        <taxon>Arabidopsis</taxon>
    </lineage>
</organism>
<gene>
    <name evidence="8" type="primary">PRK6</name>
    <name evidence="10" type="ordered locus">At5g20690</name>
    <name evidence="11" type="ORF">T1M15.90</name>
</gene>
<name>PRK6_ARATH</name>
<sequence length="659" mass="72637">MAAAVLNPGFFLLILLLSFSISPSLQYVSESEPLVRFKNSVKITKGDLNSWREGTDPCSGKWFGIYCQKGLTVSGIHVTRLGLSGTITVDDLKDLPNLKTIRLDNNLLSGPLPHFFKLRGLKSLMLSNNSFSGEIRDDFFKDMSKLKRLFLDHNKFEGSIPSSITQLPQLEELHMQSNNLTGEIPPEFGSMKNLKVLDLSTNSLDGIVPQSIADKKNLAVNLTENEYLCGPVVDVGCENIELNDPQEGQPPSKPSSSVPETSNKAAINAIMVSISLLLLFFIIVGVIKRRNKKKNPDFRMLANNRENDVVEVRISESSSTTAKRSTDSSRKRGGHSDDGSTKKGVSNIGKGGNGGGGGALGGGMGDIIMVNTDKGSFGLPDLMKAAAEVLGNGSLGSAYKAVMTTGLSVVVKRIRDMNQLAREPFDVEMRRFGKLRHPNILTPLAYHYRREEKLVVSEYMPKSSLLYVLHGDRGIYHSELTWATRLKIIQGVAHGMKFLHEEFASYDLPHGNLKSSNVLLSETYEPLISDYAFLPLLQPSNASQALFAFKTPEFAQTQQVSHKSDVYCLGIIILEILTGKFPSQYLNNGKGGTDIVQWVQSSVAEQKEEELIDPEIVNNTESMRQMVELLRVGAACIASNPDERLDMREAVRRIEQVKT</sequence>